<gene>
    <name evidence="7" type="primary">Cdkl3</name>
    <name evidence="5" type="synonym">Nkiatre</name>
</gene>
<dbReference type="EC" id="2.7.11.22"/>
<dbReference type="EMBL" id="AF112183">
    <property type="protein sequence ID" value="AAF34870.1"/>
    <property type="molecule type" value="mRNA"/>
</dbReference>
<dbReference type="EMBL" id="AF112184">
    <property type="protein sequence ID" value="AAF34871.1"/>
    <property type="molecule type" value="mRNA"/>
</dbReference>
<dbReference type="EMBL" id="AABR03073386">
    <property type="status" value="NOT_ANNOTATED_CDS"/>
    <property type="molecule type" value="Genomic_DNA"/>
</dbReference>
<dbReference type="EMBL" id="AABR03074822">
    <property type="status" value="NOT_ANNOTATED_CDS"/>
    <property type="molecule type" value="Genomic_DNA"/>
</dbReference>
<dbReference type="EMBL" id="AABR03073552">
    <property type="status" value="NOT_ANNOTATED_CDS"/>
    <property type="molecule type" value="Genomic_DNA"/>
</dbReference>
<dbReference type="RefSeq" id="NP_068540.1">
    <molecule id="Q9JM01-3"/>
    <property type="nucleotide sequence ID" value="NM_021772.2"/>
</dbReference>
<dbReference type="RefSeq" id="XP_063125832.1">
    <molecule id="Q9JM01-1"/>
    <property type="nucleotide sequence ID" value="XM_063269762.1"/>
</dbReference>
<dbReference type="SMR" id="Q9JM01"/>
<dbReference type="FunCoup" id="Q9JM01">
    <property type="interactions" value="1163"/>
</dbReference>
<dbReference type="STRING" id="10116.ENSRNOP00000072310"/>
<dbReference type="iPTMnet" id="Q9JM01"/>
<dbReference type="PhosphoSitePlus" id="Q9JM01"/>
<dbReference type="PaxDb" id="10116-ENSRNOP00000055819"/>
<dbReference type="Ensembl" id="ENSRNOT00000085895.2">
    <molecule id="Q9JM01-1"/>
    <property type="protein sequence ID" value="ENSRNOP00000073449.2"/>
    <property type="gene ID" value="ENSRNOG00000059485.2"/>
</dbReference>
<dbReference type="GeneID" id="60396"/>
<dbReference type="KEGG" id="rno:60396"/>
<dbReference type="UCSC" id="RGD:619874">
    <molecule id="Q9JM01-1"/>
    <property type="organism name" value="rat"/>
</dbReference>
<dbReference type="AGR" id="RGD:619874"/>
<dbReference type="CTD" id="51265"/>
<dbReference type="RGD" id="619874">
    <property type="gene designation" value="Cdkl3"/>
</dbReference>
<dbReference type="eggNOG" id="KOG0593">
    <property type="taxonomic scope" value="Eukaryota"/>
</dbReference>
<dbReference type="GeneTree" id="ENSGT00940000161317"/>
<dbReference type="HOGENOM" id="CLU_000288_136_1_1"/>
<dbReference type="InParanoid" id="Q9JM01"/>
<dbReference type="PhylomeDB" id="Q9JM01"/>
<dbReference type="PRO" id="PR:Q9JM01"/>
<dbReference type="Proteomes" id="UP000002494">
    <property type="component" value="Chromosome 10"/>
</dbReference>
<dbReference type="Bgee" id="ENSRNOG00000054806">
    <property type="expression patterns" value="Expressed in testis and 19 other cell types or tissues"/>
</dbReference>
<dbReference type="GO" id="GO:0005737">
    <property type="term" value="C:cytoplasm"/>
    <property type="evidence" value="ECO:0000314"/>
    <property type="project" value="MGI"/>
</dbReference>
<dbReference type="GO" id="GO:0005634">
    <property type="term" value="C:nucleus"/>
    <property type="evidence" value="ECO:0000314"/>
    <property type="project" value="MGI"/>
</dbReference>
<dbReference type="GO" id="GO:0005524">
    <property type="term" value="F:ATP binding"/>
    <property type="evidence" value="ECO:0007669"/>
    <property type="project" value="UniProtKB-KW"/>
</dbReference>
<dbReference type="GO" id="GO:0004693">
    <property type="term" value="F:cyclin-dependent protein serine/threonine kinase activity"/>
    <property type="evidence" value="ECO:0007669"/>
    <property type="project" value="UniProtKB-EC"/>
</dbReference>
<dbReference type="GO" id="GO:0106310">
    <property type="term" value="F:protein serine kinase activity"/>
    <property type="evidence" value="ECO:0007669"/>
    <property type="project" value="RHEA"/>
</dbReference>
<dbReference type="GO" id="GO:0004674">
    <property type="term" value="F:protein serine/threonine kinase activity"/>
    <property type="evidence" value="ECO:0000318"/>
    <property type="project" value="GO_Central"/>
</dbReference>
<dbReference type="GO" id="GO:0097484">
    <property type="term" value="P:dendrite extension"/>
    <property type="evidence" value="ECO:0000315"/>
    <property type="project" value="MGI"/>
</dbReference>
<dbReference type="GO" id="GO:0030517">
    <property type="term" value="P:negative regulation of axon extension"/>
    <property type="evidence" value="ECO:0000315"/>
    <property type="project" value="MGI"/>
</dbReference>
<dbReference type="GO" id="GO:0050775">
    <property type="term" value="P:positive regulation of dendrite morphogenesis"/>
    <property type="evidence" value="ECO:0000315"/>
    <property type="project" value="MGI"/>
</dbReference>
<dbReference type="FunFam" id="3.30.200.20:FF:000049">
    <property type="entry name" value="cyclin-dependent kinase-like 1 isoform X1"/>
    <property type="match status" value="1"/>
</dbReference>
<dbReference type="FunFam" id="1.10.510.10:FF:000370">
    <property type="entry name" value="cyclin-dependent kinase-like 3 isoform X2"/>
    <property type="match status" value="1"/>
</dbReference>
<dbReference type="Gene3D" id="3.30.200.20">
    <property type="entry name" value="Phosphorylase Kinase, domain 1"/>
    <property type="match status" value="1"/>
</dbReference>
<dbReference type="Gene3D" id="1.10.510.10">
    <property type="entry name" value="Transferase(Phosphotransferase) domain 1"/>
    <property type="match status" value="1"/>
</dbReference>
<dbReference type="InterPro" id="IPR050108">
    <property type="entry name" value="CDK"/>
</dbReference>
<dbReference type="InterPro" id="IPR011009">
    <property type="entry name" value="Kinase-like_dom_sf"/>
</dbReference>
<dbReference type="InterPro" id="IPR000719">
    <property type="entry name" value="Prot_kinase_dom"/>
</dbReference>
<dbReference type="InterPro" id="IPR017441">
    <property type="entry name" value="Protein_kinase_ATP_BS"/>
</dbReference>
<dbReference type="InterPro" id="IPR008271">
    <property type="entry name" value="Ser/Thr_kinase_AS"/>
</dbReference>
<dbReference type="PANTHER" id="PTHR24056">
    <property type="entry name" value="CELL DIVISION PROTEIN KINASE"/>
    <property type="match status" value="1"/>
</dbReference>
<dbReference type="PANTHER" id="PTHR24056:SF177">
    <property type="entry name" value="CYCLIN-DEPENDENT KINASE-LIKE 3"/>
    <property type="match status" value="1"/>
</dbReference>
<dbReference type="Pfam" id="PF00069">
    <property type="entry name" value="Pkinase"/>
    <property type="match status" value="1"/>
</dbReference>
<dbReference type="SMART" id="SM00220">
    <property type="entry name" value="S_TKc"/>
    <property type="match status" value="1"/>
</dbReference>
<dbReference type="SUPFAM" id="SSF56112">
    <property type="entry name" value="Protein kinase-like (PK-like)"/>
    <property type="match status" value="1"/>
</dbReference>
<dbReference type="PROSITE" id="PS00107">
    <property type="entry name" value="PROTEIN_KINASE_ATP"/>
    <property type="match status" value="1"/>
</dbReference>
<dbReference type="PROSITE" id="PS50011">
    <property type="entry name" value="PROTEIN_KINASE_DOM"/>
    <property type="match status" value="1"/>
</dbReference>
<dbReference type="PROSITE" id="PS00108">
    <property type="entry name" value="PROTEIN_KINASE_ST"/>
    <property type="match status" value="1"/>
</dbReference>
<feature type="chain" id="PRO_0000085823" description="Cyclin-dependent kinase-like 3">
    <location>
        <begin position="1"/>
        <end position="593"/>
    </location>
</feature>
<feature type="domain" description="Protein kinase" evidence="1">
    <location>
        <begin position="4"/>
        <end position="286"/>
    </location>
</feature>
<feature type="region of interest" description="Disordered" evidence="3">
    <location>
        <begin position="368"/>
        <end position="512"/>
    </location>
</feature>
<feature type="short sequence motif" description="[NKR]KIAxRE">
    <location>
        <begin position="45"/>
        <end position="51"/>
    </location>
</feature>
<feature type="compositionally biased region" description="Basic and acidic residues" evidence="3">
    <location>
        <begin position="368"/>
        <end position="403"/>
    </location>
</feature>
<feature type="compositionally biased region" description="Low complexity" evidence="3">
    <location>
        <begin position="436"/>
        <end position="452"/>
    </location>
</feature>
<feature type="compositionally biased region" description="Polar residues" evidence="3">
    <location>
        <begin position="468"/>
        <end position="491"/>
    </location>
</feature>
<feature type="compositionally biased region" description="Polar residues" evidence="3">
    <location>
        <begin position="499"/>
        <end position="508"/>
    </location>
</feature>
<feature type="active site" description="Proton acceptor" evidence="1 2">
    <location>
        <position position="125"/>
    </location>
</feature>
<feature type="binding site" evidence="1">
    <location>
        <begin position="10"/>
        <end position="18"/>
    </location>
    <ligand>
        <name>ATP</name>
        <dbReference type="ChEBI" id="CHEBI:30616"/>
    </ligand>
</feature>
<feature type="binding site" evidence="1">
    <location>
        <position position="33"/>
    </location>
    <ligand>
        <name>ATP</name>
        <dbReference type="ChEBI" id="CHEBI:30616"/>
    </ligand>
</feature>
<feature type="modified residue" description="Phosphothreonine" evidence="8">
    <location>
        <position position="158"/>
    </location>
</feature>
<feature type="modified residue" description="Phosphotyrosine" evidence="8">
    <location>
        <position position="160"/>
    </location>
</feature>
<feature type="splice variant" id="VSP_016158" description="In isoform 3." evidence="5">
    <location>
        <begin position="458"/>
        <end position="593"/>
    </location>
</feature>
<feature type="splice variant" id="VSP_016159" description="In isoform 2." evidence="5">
    <original>DQ</original>
    <variation>AK</variation>
    <location>
        <begin position="504"/>
        <end position="505"/>
    </location>
</feature>
<feature type="splice variant" id="VSP_016160" description="In isoform 2." evidence="5">
    <location>
        <begin position="506"/>
        <end position="593"/>
    </location>
</feature>
<protein>
    <recommendedName>
        <fullName evidence="6">Cyclin-dependent kinase-like 3</fullName>
        <ecNumber>2.7.11.22</ecNumber>
    </recommendedName>
    <alternativeName>
        <fullName>Serine/threonine protein kinase NKIATRE</fullName>
    </alternativeName>
</protein>
<proteinExistence type="evidence at protein level"/>
<reference key="1">
    <citation type="journal article" date="2001" name="Genomics">
        <title>NKIATRE is a novel conserved cdc2-related kinase.</title>
        <authorList>
            <person name="Haq R."/>
            <person name="Randall S."/>
            <person name="Midmer M."/>
            <person name="Yee K."/>
            <person name="Zanke B."/>
        </authorList>
    </citation>
    <scope>NUCLEOTIDE SEQUENCE [MRNA] (ISOFORMS 2 AND 3)</scope>
    <scope>TISSUE SPECIFICITY</scope>
    <scope>SUBCELLULAR LOCATION</scope>
    <source>
        <tissue>Brain</tissue>
        <tissue>Jejunum</tissue>
    </source>
</reference>
<reference key="2">
    <citation type="journal article" date="2004" name="Nature">
        <title>Genome sequence of the Brown Norway rat yields insights into mammalian evolution.</title>
        <authorList>
            <person name="Gibbs R.A."/>
            <person name="Weinstock G.M."/>
            <person name="Metzker M.L."/>
            <person name="Muzny D.M."/>
            <person name="Sodergren E.J."/>
            <person name="Scherer S."/>
            <person name="Scott G."/>
            <person name="Steffen D."/>
            <person name="Worley K.C."/>
            <person name="Burch P.E."/>
            <person name="Okwuonu G."/>
            <person name="Hines S."/>
            <person name="Lewis L."/>
            <person name="Deramo C."/>
            <person name="Delgado O."/>
            <person name="Dugan-Rocha S."/>
            <person name="Miner G."/>
            <person name="Morgan M."/>
            <person name="Hawes A."/>
            <person name="Gill R."/>
            <person name="Holt R.A."/>
            <person name="Adams M.D."/>
            <person name="Amanatides P.G."/>
            <person name="Baden-Tillson H."/>
            <person name="Barnstead M."/>
            <person name="Chin S."/>
            <person name="Evans C.A."/>
            <person name="Ferriera S."/>
            <person name="Fosler C."/>
            <person name="Glodek A."/>
            <person name="Gu Z."/>
            <person name="Jennings D."/>
            <person name="Kraft C.L."/>
            <person name="Nguyen T."/>
            <person name="Pfannkoch C.M."/>
            <person name="Sitter C."/>
            <person name="Sutton G.G."/>
            <person name="Venter J.C."/>
            <person name="Woodage T."/>
            <person name="Smith D."/>
            <person name="Lee H.-M."/>
            <person name="Gustafson E."/>
            <person name="Cahill P."/>
            <person name="Kana A."/>
            <person name="Doucette-Stamm L."/>
            <person name="Weinstock K."/>
            <person name="Fechtel K."/>
            <person name="Weiss R.B."/>
            <person name="Dunn D.M."/>
            <person name="Green E.D."/>
            <person name="Blakesley R.W."/>
            <person name="Bouffard G.G."/>
            <person name="De Jong P.J."/>
            <person name="Osoegawa K."/>
            <person name="Zhu B."/>
            <person name="Marra M."/>
            <person name="Schein J."/>
            <person name="Bosdet I."/>
            <person name="Fjell C."/>
            <person name="Jones S."/>
            <person name="Krzywinski M."/>
            <person name="Mathewson C."/>
            <person name="Siddiqui A."/>
            <person name="Wye N."/>
            <person name="McPherson J."/>
            <person name="Zhao S."/>
            <person name="Fraser C.M."/>
            <person name="Shetty J."/>
            <person name="Shatsman S."/>
            <person name="Geer K."/>
            <person name="Chen Y."/>
            <person name="Abramzon S."/>
            <person name="Nierman W.C."/>
            <person name="Havlak P.H."/>
            <person name="Chen R."/>
            <person name="Durbin K.J."/>
            <person name="Egan A."/>
            <person name="Ren Y."/>
            <person name="Song X.-Z."/>
            <person name="Li B."/>
            <person name="Liu Y."/>
            <person name="Qin X."/>
            <person name="Cawley S."/>
            <person name="Cooney A.J."/>
            <person name="D'Souza L.M."/>
            <person name="Martin K."/>
            <person name="Wu J.Q."/>
            <person name="Gonzalez-Garay M.L."/>
            <person name="Jackson A.R."/>
            <person name="Kalafus K.J."/>
            <person name="McLeod M.P."/>
            <person name="Milosavljevic A."/>
            <person name="Virk D."/>
            <person name="Volkov A."/>
            <person name="Wheeler D.A."/>
            <person name="Zhang Z."/>
            <person name="Bailey J.A."/>
            <person name="Eichler E.E."/>
            <person name="Tuzun E."/>
            <person name="Birney E."/>
            <person name="Mongin E."/>
            <person name="Ureta-Vidal A."/>
            <person name="Woodwark C."/>
            <person name="Zdobnov E."/>
            <person name="Bork P."/>
            <person name="Suyama M."/>
            <person name="Torrents D."/>
            <person name="Alexandersson M."/>
            <person name="Trask B.J."/>
            <person name="Young J.M."/>
            <person name="Huang H."/>
            <person name="Wang H."/>
            <person name="Xing H."/>
            <person name="Daniels S."/>
            <person name="Gietzen D."/>
            <person name="Schmidt J."/>
            <person name="Stevens K."/>
            <person name="Vitt U."/>
            <person name="Wingrove J."/>
            <person name="Camara F."/>
            <person name="Mar Alba M."/>
            <person name="Abril J.F."/>
            <person name="Guigo R."/>
            <person name="Smit A."/>
            <person name="Dubchak I."/>
            <person name="Rubin E.M."/>
            <person name="Couronne O."/>
            <person name="Poliakov A."/>
            <person name="Huebner N."/>
            <person name="Ganten D."/>
            <person name="Goesele C."/>
            <person name="Hummel O."/>
            <person name="Kreitler T."/>
            <person name="Lee Y.-A."/>
            <person name="Monti J."/>
            <person name="Schulz H."/>
            <person name="Zimdahl H."/>
            <person name="Himmelbauer H."/>
            <person name="Lehrach H."/>
            <person name="Jacob H.J."/>
            <person name="Bromberg S."/>
            <person name="Gullings-Handley J."/>
            <person name="Jensen-Seaman M.I."/>
            <person name="Kwitek A.E."/>
            <person name="Lazar J."/>
            <person name="Pasko D."/>
            <person name="Tonellato P.J."/>
            <person name="Twigger S."/>
            <person name="Ponting C.P."/>
            <person name="Duarte J.M."/>
            <person name="Rice S."/>
            <person name="Goodstadt L."/>
            <person name="Beatson S.A."/>
            <person name="Emes R.D."/>
            <person name="Winter E.E."/>
            <person name="Webber C."/>
            <person name="Brandt P."/>
            <person name="Nyakatura G."/>
            <person name="Adetobi M."/>
            <person name="Chiaromonte F."/>
            <person name="Elnitski L."/>
            <person name="Eswara P."/>
            <person name="Hardison R.C."/>
            <person name="Hou M."/>
            <person name="Kolbe D."/>
            <person name="Makova K."/>
            <person name="Miller W."/>
            <person name="Nekrutenko A."/>
            <person name="Riemer C."/>
            <person name="Schwartz S."/>
            <person name="Taylor J."/>
            <person name="Yang S."/>
            <person name="Zhang Y."/>
            <person name="Lindpaintner K."/>
            <person name="Andrews T.D."/>
            <person name="Caccamo M."/>
            <person name="Clamp M."/>
            <person name="Clarke L."/>
            <person name="Curwen V."/>
            <person name="Durbin R.M."/>
            <person name="Eyras E."/>
            <person name="Searle S.M."/>
            <person name="Cooper G.M."/>
            <person name="Batzoglou S."/>
            <person name="Brudno M."/>
            <person name="Sidow A."/>
            <person name="Stone E.A."/>
            <person name="Payseur B.A."/>
            <person name="Bourque G."/>
            <person name="Lopez-Otin C."/>
            <person name="Puente X.S."/>
            <person name="Chakrabarti K."/>
            <person name="Chatterji S."/>
            <person name="Dewey C."/>
            <person name="Pachter L."/>
            <person name="Bray N."/>
            <person name="Yap V.B."/>
            <person name="Caspi A."/>
            <person name="Tesler G."/>
            <person name="Pevzner P.A."/>
            <person name="Haussler D."/>
            <person name="Roskin K.M."/>
            <person name="Baertsch R."/>
            <person name="Clawson H."/>
            <person name="Furey T.S."/>
            <person name="Hinrichs A.S."/>
            <person name="Karolchik D."/>
            <person name="Kent W.J."/>
            <person name="Rosenbloom K.R."/>
            <person name="Trumbower H."/>
            <person name="Weirauch M."/>
            <person name="Cooper D.N."/>
            <person name="Stenson P.D."/>
            <person name="Ma B."/>
            <person name="Brent M."/>
            <person name="Arumugam M."/>
            <person name="Shteynberg D."/>
            <person name="Copley R.R."/>
            <person name="Taylor M.S."/>
            <person name="Riethman H."/>
            <person name="Mudunuri U."/>
            <person name="Peterson J."/>
            <person name="Guyer M."/>
            <person name="Felsenfeld A."/>
            <person name="Old S."/>
            <person name="Mockrin S."/>
            <person name="Collins F.S."/>
        </authorList>
    </citation>
    <scope>NUCLEOTIDE SEQUENCE [LARGE SCALE GENOMIC DNA]</scope>
    <source>
        <strain>Brown Norway</strain>
    </source>
</reference>
<reference key="3">
    <citation type="journal article" date="2012" name="Nat. Commun.">
        <title>Quantitative maps of protein phosphorylation sites across 14 different rat organs and tissues.</title>
        <authorList>
            <person name="Lundby A."/>
            <person name="Secher A."/>
            <person name="Lage K."/>
            <person name="Nordsborg N.B."/>
            <person name="Dmytriyev A."/>
            <person name="Lundby C."/>
            <person name="Olsen J.V."/>
        </authorList>
    </citation>
    <scope>PHOSPHORYLATION [LARGE SCALE ANALYSIS] AT THR-158 AND TYR-160</scope>
    <scope>IDENTIFICATION BY MASS SPECTROMETRY [LARGE SCALE ANALYSIS]</scope>
</reference>
<accession>Q9JM01</accession>
<accession>Q9JM02</accession>
<evidence type="ECO:0000255" key="1">
    <source>
        <dbReference type="PROSITE-ProRule" id="PRU00159"/>
    </source>
</evidence>
<evidence type="ECO:0000255" key="2">
    <source>
        <dbReference type="PROSITE-ProRule" id="PRU10027"/>
    </source>
</evidence>
<evidence type="ECO:0000256" key="3">
    <source>
        <dbReference type="SAM" id="MobiDB-lite"/>
    </source>
</evidence>
<evidence type="ECO:0000269" key="4">
    <source>
    </source>
</evidence>
<evidence type="ECO:0000303" key="5">
    <source>
    </source>
</evidence>
<evidence type="ECO:0000305" key="6"/>
<evidence type="ECO:0000312" key="7">
    <source>
        <dbReference type="RGD" id="619874"/>
    </source>
</evidence>
<evidence type="ECO:0007744" key="8">
    <source>
    </source>
</evidence>
<comment type="catalytic activity">
    <reaction>
        <text>L-seryl-[protein] + ATP = O-phospho-L-seryl-[protein] + ADP + H(+)</text>
        <dbReference type="Rhea" id="RHEA:17989"/>
        <dbReference type="Rhea" id="RHEA-COMP:9863"/>
        <dbReference type="Rhea" id="RHEA-COMP:11604"/>
        <dbReference type="ChEBI" id="CHEBI:15378"/>
        <dbReference type="ChEBI" id="CHEBI:29999"/>
        <dbReference type="ChEBI" id="CHEBI:30616"/>
        <dbReference type="ChEBI" id="CHEBI:83421"/>
        <dbReference type="ChEBI" id="CHEBI:456216"/>
        <dbReference type="EC" id="2.7.11.22"/>
    </reaction>
</comment>
<comment type="catalytic activity">
    <reaction>
        <text>L-threonyl-[protein] + ATP = O-phospho-L-threonyl-[protein] + ADP + H(+)</text>
        <dbReference type="Rhea" id="RHEA:46608"/>
        <dbReference type="Rhea" id="RHEA-COMP:11060"/>
        <dbReference type="Rhea" id="RHEA-COMP:11605"/>
        <dbReference type="ChEBI" id="CHEBI:15378"/>
        <dbReference type="ChEBI" id="CHEBI:30013"/>
        <dbReference type="ChEBI" id="CHEBI:30616"/>
        <dbReference type="ChEBI" id="CHEBI:61977"/>
        <dbReference type="ChEBI" id="CHEBI:456216"/>
        <dbReference type="EC" id="2.7.11.22"/>
    </reaction>
</comment>
<comment type="subcellular location">
    <molecule>Isoform 2</molecule>
    <subcellularLocation>
        <location>Nucleus</location>
    </subcellularLocation>
    <subcellularLocation>
        <location>Cytoplasm</location>
    </subcellularLocation>
</comment>
<comment type="subcellular location">
    <molecule>Isoform 3</molecule>
    <subcellularLocation>
        <location>Cytoplasm</location>
    </subcellularLocation>
</comment>
<comment type="alternative products">
    <event type="alternative splicing"/>
    <isoform>
        <id>Q9JM01-1</id>
        <name>1</name>
        <sequence type="displayed"/>
    </isoform>
    <isoform>
        <id>Q9JM01-2</id>
        <name>2</name>
        <name>NKIATRE alpha</name>
        <name>p57 alpha isoform</name>
        <sequence type="described" ref="VSP_016159 VSP_016160"/>
    </isoform>
    <isoform>
        <id>Q9JM01-3</id>
        <name>3</name>
        <name>NKIATRE beta</name>
        <name>p52 beta isoform</name>
        <sequence type="described" ref="VSP_016158"/>
    </isoform>
</comment>
<comment type="tissue specificity">
    <text evidence="4">Highly expressed in brain, and to a lower extent in heart and testis.</text>
</comment>
<comment type="domain">
    <text>The [NKR]KIAxRE motif seems to be a cyclin-binding region.</text>
</comment>
<comment type="miscellaneous">
    <molecule>Isoform 2</molecule>
    <text evidence="6">Found in the nucleus and cytoplasm.</text>
</comment>
<comment type="miscellaneous">
    <molecule>Isoform 3</molecule>
    <text evidence="6">Found in the cytoplasm.</text>
</comment>
<comment type="similarity">
    <text evidence="6">Belongs to the protein kinase superfamily. CMGC Ser/Thr protein kinase family. CDC2/CDKX subfamily.</text>
</comment>
<sequence>MEMYETLGKVGEGSYGTVMKCKHKDTGRIVAIKIFYEKPEKSVNKIATREIKFLKQFRHENLVNLIEVFRQKKKIHLVFEFIDHTVLDELQHYCHGLESKRLRKYLFQILRAIEYLHNNNIIHRDIKPENILVSQSGITKLCDFGFARTLAAPGDVYTDYVATRWYRAPELVLKDTTYGKPVDIWALGCMIIEMATGNPYLPSSSDLDLLHKIVLKVGNLTPHLHNIFSKSPIFAGVVLPQVQHPKNARKKYPKLNGLLADIVHACLQIDPAERISSTDLLHHDYFTRDGFIEKFIPELRAKLLQEAKVNSFIKPKENFKENEPVRDEKKPVFTNPLLYGNPTLYGKEVDRDKRAKELKVRVIKAKGGKGDVPDLKKTESEGEHRQQGTAEDTHPTSLDRKPSVSELTNPVHPSANSDTVKEDPHSGGCMIMPPINLTSSNLLAANPSSNLSHPNSRLTERTKKRRTSSQTIGQTLSNSRQEDTGPTQVQTEKGAFNERTGQNDQIASGNKRKLNFSKCDRKEFHFPELPFTIQAKEMKGMEVKQIKVLKRESKKTDSPKIPTLLSMDSNQEKQEVFNIFPGWCKRGNLNWPS</sequence>
<keyword id="KW-0025">Alternative splicing</keyword>
<keyword id="KW-0067">ATP-binding</keyword>
<keyword id="KW-0963">Cytoplasm</keyword>
<keyword id="KW-0418">Kinase</keyword>
<keyword id="KW-0547">Nucleotide-binding</keyword>
<keyword id="KW-0539">Nucleus</keyword>
<keyword id="KW-0597">Phosphoprotein</keyword>
<keyword id="KW-1185">Reference proteome</keyword>
<keyword id="KW-0723">Serine/threonine-protein kinase</keyword>
<keyword id="KW-0808">Transferase</keyword>
<name>CDKL3_RAT</name>
<organism>
    <name type="scientific">Rattus norvegicus</name>
    <name type="common">Rat</name>
    <dbReference type="NCBI Taxonomy" id="10116"/>
    <lineage>
        <taxon>Eukaryota</taxon>
        <taxon>Metazoa</taxon>
        <taxon>Chordata</taxon>
        <taxon>Craniata</taxon>
        <taxon>Vertebrata</taxon>
        <taxon>Euteleostomi</taxon>
        <taxon>Mammalia</taxon>
        <taxon>Eutheria</taxon>
        <taxon>Euarchontoglires</taxon>
        <taxon>Glires</taxon>
        <taxon>Rodentia</taxon>
        <taxon>Myomorpha</taxon>
        <taxon>Muroidea</taxon>
        <taxon>Muridae</taxon>
        <taxon>Murinae</taxon>
        <taxon>Rattus</taxon>
    </lineage>
</organism>